<sequence>MGLHAILLLLLLRISASAAASRPPLDTLGIPPQDEAYFRGGVIRCRDGSGRFARDKLNDDFCDCPDGTDEPGTSACPEGKFYCQNAGHSPITIFSSRVNDGICDCCDGSDEYDSNVTCKNTCWEAGKAARDKLKKKVATYKSGVVIRNQEIQKAKVAFAKDEAELAKLKGEEKILQGLVDKLTEQKKLIEKAEEEERLRKEKEEKRMKEEAEKQAADEKKASDASQEVDSQENHETVQEDESKVAEHHDGHATSHDNHTPESESSVEQHDPESQDDISIKAAPADESPPEETSAAPTKEQESTPADSEGLSREELGRLVASRWTGEKVDEVSKDDKNEHEAEHDMPEHSEETHEDESDVPESAEDSYAGYHSEVEDDRHKYDDEDFSHESDDEYVDDHDEHVASYKSDDDQKGDDHSDFTASGQASWLDKIQQTVQNVLRTFNFFKTPVDLSEASRVRKEYDDASSKLSKIQSRISTLTDKLKHDFGKEKEFYYFYDQCFESKEGKYVYKVCPFKKASQVEGHSTTSLGRWDKFEESYRVMQFSNGDRCWNGPDRSLKVRLRCGLNNELNGVDEPSRCEYVAVLSTPALCDEQKLKELEQKLKASSNQRDHDEL</sequence>
<accession>Q5NBP9</accession>
<accession>A0A0P0V0Y0</accession>
<accession>B9EV73</accession>
<proteinExistence type="evidence at transcript level"/>
<protein>
    <recommendedName>
        <fullName>Glucosidase 2 subunit beta</fullName>
    </recommendedName>
    <alternativeName>
        <fullName>Glucosidase II subunit beta</fullName>
    </alternativeName>
</protein>
<dbReference type="EMBL" id="AP000836">
    <property type="protein sequence ID" value="BAD81117.1"/>
    <property type="molecule type" value="Genomic_DNA"/>
</dbReference>
<dbReference type="EMBL" id="AP008207">
    <property type="protein sequence ID" value="BAF04646.1"/>
    <property type="molecule type" value="Genomic_DNA"/>
</dbReference>
<dbReference type="EMBL" id="AP014957">
    <property type="protein sequence ID" value="BAS71556.1"/>
    <property type="molecule type" value="Genomic_DNA"/>
</dbReference>
<dbReference type="EMBL" id="CM000138">
    <property type="protein sequence ID" value="EEE54323.1"/>
    <property type="molecule type" value="Genomic_DNA"/>
</dbReference>
<dbReference type="EMBL" id="AK102926">
    <property type="protein sequence ID" value="BAG95785.1"/>
    <property type="molecule type" value="mRNA"/>
</dbReference>
<dbReference type="RefSeq" id="XP_015621560.1">
    <property type="nucleotide sequence ID" value="XM_015766074.1"/>
</dbReference>
<dbReference type="RefSeq" id="XP_015621562.1">
    <property type="nucleotide sequence ID" value="XM_015766076.1"/>
</dbReference>
<dbReference type="SMR" id="Q5NBP9"/>
<dbReference type="FunCoup" id="Q5NBP9">
    <property type="interactions" value="3704"/>
</dbReference>
<dbReference type="STRING" id="39947.Q5NBP9"/>
<dbReference type="PaxDb" id="39947-Q5NBP9"/>
<dbReference type="EnsemblPlants" id="Os01t0276800-01">
    <property type="protein sequence ID" value="Os01t0276800-01"/>
    <property type="gene ID" value="Os01g0276800"/>
</dbReference>
<dbReference type="Gramene" id="Os01t0276800-01">
    <property type="protein sequence ID" value="Os01t0276800-01"/>
    <property type="gene ID" value="Os01g0276800"/>
</dbReference>
<dbReference type="KEGG" id="dosa:Os01g0276800"/>
<dbReference type="eggNOG" id="KOG2397">
    <property type="taxonomic scope" value="Eukaryota"/>
</dbReference>
<dbReference type="HOGENOM" id="CLU_016834_3_0_1"/>
<dbReference type="InParanoid" id="Q5NBP9"/>
<dbReference type="OMA" id="YENGQHC"/>
<dbReference type="OrthoDB" id="28322at2759"/>
<dbReference type="BRENDA" id="3.2.1.207">
    <property type="organism ID" value="4460"/>
</dbReference>
<dbReference type="UniPathway" id="UPA00957"/>
<dbReference type="Proteomes" id="UP000000763">
    <property type="component" value="Chromosome 1"/>
</dbReference>
<dbReference type="Proteomes" id="UP000007752">
    <property type="component" value="Chromosome 1"/>
</dbReference>
<dbReference type="Proteomes" id="UP000059680">
    <property type="component" value="Chromosome 1"/>
</dbReference>
<dbReference type="ExpressionAtlas" id="Q5NBP9">
    <property type="expression patterns" value="baseline and differential"/>
</dbReference>
<dbReference type="GO" id="GO:0017177">
    <property type="term" value="C:glucosidase II complex"/>
    <property type="evidence" value="ECO:0000318"/>
    <property type="project" value="GO_Central"/>
</dbReference>
<dbReference type="GO" id="GO:0042742">
    <property type="term" value="P:defense response to bacterium"/>
    <property type="evidence" value="ECO:0007669"/>
    <property type="project" value="EnsemblPlants"/>
</dbReference>
<dbReference type="GO" id="GO:0006491">
    <property type="term" value="P:N-glycan processing"/>
    <property type="evidence" value="ECO:0000318"/>
    <property type="project" value="GO_Central"/>
</dbReference>
<dbReference type="Gene3D" id="2.70.130.10">
    <property type="entry name" value="Mannose-6-phosphate receptor binding domain"/>
    <property type="match status" value="1"/>
</dbReference>
<dbReference type="InterPro" id="IPR039794">
    <property type="entry name" value="Gtb1-like"/>
</dbReference>
<dbReference type="InterPro" id="IPR009011">
    <property type="entry name" value="Man6P_isomerase_rcpt-bd_dom_sf"/>
</dbReference>
<dbReference type="InterPro" id="IPR044865">
    <property type="entry name" value="MRH_dom"/>
</dbReference>
<dbReference type="InterPro" id="IPR036607">
    <property type="entry name" value="PRKCSH"/>
</dbReference>
<dbReference type="InterPro" id="IPR028146">
    <property type="entry name" value="PRKCSH_N"/>
</dbReference>
<dbReference type="PANTHER" id="PTHR12630:SF1">
    <property type="entry name" value="GLUCOSIDASE 2 SUBUNIT BETA"/>
    <property type="match status" value="1"/>
</dbReference>
<dbReference type="PANTHER" id="PTHR12630">
    <property type="entry name" value="N-LINKED OLIGOSACCHARIDE PROCESSING"/>
    <property type="match status" value="1"/>
</dbReference>
<dbReference type="Pfam" id="PF12999">
    <property type="entry name" value="PRKCSH-like"/>
    <property type="match status" value="1"/>
</dbReference>
<dbReference type="Pfam" id="PF13015">
    <property type="entry name" value="PRKCSH_1"/>
    <property type="match status" value="1"/>
</dbReference>
<dbReference type="SUPFAM" id="SSF50911">
    <property type="entry name" value="Mannose 6-phosphate receptor domain"/>
    <property type="match status" value="1"/>
</dbReference>
<dbReference type="PROSITE" id="PS00014">
    <property type="entry name" value="ER_TARGET"/>
    <property type="match status" value="1"/>
</dbReference>
<dbReference type="PROSITE" id="PS51914">
    <property type="entry name" value="MRH"/>
    <property type="match status" value="1"/>
</dbReference>
<gene>
    <name type="ordered locus">Os01g0276800</name>
    <name type="ORF">OsJ_01291</name>
    <name type="ORF">P0038F12.26</name>
</gene>
<evidence type="ECO:0000250" key="1"/>
<evidence type="ECO:0000255" key="2"/>
<evidence type="ECO:0000255" key="3">
    <source>
        <dbReference type="PROSITE-ProRule" id="PRU01262"/>
    </source>
</evidence>
<evidence type="ECO:0000255" key="4">
    <source>
        <dbReference type="PROSITE-ProRule" id="PRU10138"/>
    </source>
</evidence>
<evidence type="ECO:0000256" key="5">
    <source>
        <dbReference type="SAM" id="MobiDB-lite"/>
    </source>
</evidence>
<evidence type="ECO:0000305" key="6"/>
<comment type="function">
    <text evidence="1">Regulatory subunit of glucosidase II. May be required for defense response elicited by pathogen-associated molecular patterns (PAMPs) (By similarity).</text>
</comment>
<comment type="pathway">
    <text>Glycan metabolism; N-glycan metabolism.</text>
</comment>
<comment type="subunit">
    <text evidence="1">Heterodimer of a catalytic alpha subunit and a beta subunit.</text>
</comment>
<comment type="subcellular location">
    <subcellularLocation>
        <location evidence="4">Endoplasmic reticulum</location>
    </subcellularLocation>
</comment>
<keyword id="KW-1015">Disulfide bond</keyword>
<keyword id="KW-0256">Endoplasmic reticulum</keyword>
<keyword id="KW-0325">Glycoprotein</keyword>
<keyword id="KW-0611">Plant defense</keyword>
<keyword id="KW-1185">Reference proteome</keyword>
<keyword id="KW-0732">Signal</keyword>
<feature type="signal peptide" evidence="2">
    <location>
        <begin position="1"/>
        <end position="19"/>
    </location>
</feature>
<feature type="chain" id="PRO_0000425977" description="Glucosidase 2 subunit beta">
    <location>
        <begin position="20"/>
        <end position="614"/>
    </location>
</feature>
<feature type="domain" description="MRH" evidence="3">
    <location>
        <begin position="497"/>
        <end position="592"/>
    </location>
</feature>
<feature type="region of interest" description="Disordered" evidence="5">
    <location>
        <begin position="194"/>
        <end position="396"/>
    </location>
</feature>
<feature type="compositionally biased region" description="Basic and acidic residues" evidence="5">
    <location>
        <begin position="194"/>
        <end position="222"/>
    </location>
</feature>
<feature type="compositionally biased region" description="Basic and acidic residues" evidence="5">
    <location>
        <begin position="231"/>
        <end position="272"/>
    </location>
</feature>
<feature type="compositionally biased region" description="Basic and acidic residues" evidence="5">
    <location>
        <begin position="324"/>
        <end position="351"/>
    </location>
</feature>
<feature type="compositionally biased region" description="Acidic residues" evidence="5">
    <location>
        <begin position="352"/>
        <end position="364"/>
    </location>
</feature>
<feature type="compositionally biased region" description="Basic and acidic residues" evidence="5">
    <location>
        <begin position="372"/>
        <end position="382"/>
    </location>
</feature>
<feature type="compositionally biased region" description="Acidic residues" evidence="5">
    <location>
        <begin position="383"/>
        <end position="396"/>
    </location>
</feature>
<feature type="glycosylation site" description="N-linked (GlcNAc...) asparagine" evidence="2">
    <location>
        <position position="115"/>
    </location>
</feature>
<feature type="disulfide bond" evidence="3">
    <location>
        <begin position="499"/>
        <end position="512"/>
    </location>
</feature>
<feature type="disulfide bond" evidence="3">
    <location>
        <begin position="549"/>
        <end position="578"/>
    </location>
</feature>
<feature type="disulfide bond" evidence="3">
    <location>
        <begin position="563"/>
        <end position="590"/>
    </location>
</feature>
<feature type="sequence conflict" description="In Ref. 5; EEE54323." evidence="6" ref="5">
    <original>V</original>
    <variation>F</variation>
    <location>
        <position position="144"/>
    </location>
</feature>
<organism>
    <name type="scientific">Oryza sativa subsp. japonica</name>
    <name type="common">Rice</name>
    <dbReference type="NCBI Taxonomy" id="39947"/>
    <lineage>
        <taxon>Eukaryota</taxon>
        <taxon>Viridiplantae</taxon>
        <taxon>Streptophyta</taxon>
        <taxon>Embryophyta</taxon>
        <taxon>Tracheophyta</taxon>
        <taxon>Spermatophyta</taxon>
        <taxon>Magnoliopsida</taxon>
        <taxon>Liliopsida</taxon>
        <taxon>Poales</taxon>
        <taxon>Poaceae</taxon>
        <taxon>BOP clade</taxon>
        <taxon>Oryzoideae</taxon>
        <taxon>Oryzeae</taxon>
        <taxon>Oryzinae</taxon>
        <taxon>Oryza</taxon>
        <taxon>Oryza sativa</taxon>
    </lineage>
</organism>
<reference key="1">
    <citation type="journal article" date="2002" name="Nature">
        <title>The genome sequence and structure of rice chromosome 1.</title>
        <authorList>
            <person name="Sasaki T."/>
            <person name="Matsumoto T."/>
            <person name="Yamamoto K."/>
            <person name="Sakata K."/>
            <person name="Baba T."/>
            <person name="Katayose Y."/>
            <person name="Wu J."/>
            <person name="Niimura Y."/>
            <person name="Cheng Z."/>
            <person name="Nagamura Y."/>
            <person name="Antonio B.A."/>
            <person name="Kanamori H."/>
            <person name="Hosokawa S."/>
            <person name="Masukawa M."/>
            <person name="Arikawa K."/>
            <person name="Chiden Y."/>
            <person name="Hayashi M."/>
            <person name="Okamoto M."/>
            <person name="Ando T."/>
            <person name="Aoki H."/>
            <person name="Arita K."/>
            <person name="Hamada M."/>
            <person name="Harada C."/>
            <person name="Hijishita S."/>
            <person name="Honda M."/>
            <person name="Ichikawa Y."/>
            <person name="Idonuma A."/>
            <person name="Iijima M."/>
            <person name="Ikeda M."/>
            <person name="Ikeno M."/>
            <person name="Ito S."/>
            <person name="Ito T."/>
            <person name="Ito Y."/>
            <person name="Ito Y."/>
            <person name="Iwabuchi A."/>
            <person name="Kamiya K."/>
            <person name="Karasawa W."/>
            <person name="Katagiri S."/>
            <person name="Kikuta A."/>
            <person name="Kobayashi N."/>
            <person name="Kono I."/>
            <person name="Machita K."/>
            <person name="Maehara T."/>
            <person name="Mizuno H."/>
            <person name="Mizubayashi T."/>
            <person name="Mukai Y."/>
            <person name="Nagasaki H."/>
            <person name="Nakashima M."/>
            <person name="Nakama Y."/>
            <person name="Nakamichi Y."/>
            <person name="Nakamura M."/>
            <person name="Namiki N."/>
            <person name="Negishi M."/>
            <person name="Ohta I."/>
            <person name="Ono N."/>
            <person name="Saji S."/>
            <person name="Sakai K."/>
            <person name="Shibata M."/>
            <person name="Shimokawa T."/>
            <person name="Shomura A."/>
            <person name="Song J."/>
            <person name="Takazaki Y."/>
            <person name="Terasawa K."/>
            <person name="Tsuji K."/>
            <person name="Waki K."/>
            <person name="Yamagata H."/>
            <person name="Yamane H."/>
            <person name="Yoshiki S."/>
            <person name="Yoshihara R."/>
            <person name="Yukawa K."/>
            <person name="Zhong H."/>
            <person name="Iwama H."/>
            <person name="Endo T."/>
            <person name="Ito H."/>
            <person name="Hahn J.H."/>
            <person name="Kim H.-I."/>
            <person name="Eun M.-Y."/>
            <person name="Yano M."/>
            <person name="Jiang J."/>
            <person name="Gojobori T."/>
        </authorList>
    </citation>
    <scope>NUCLEOTIDE SEQUENCE [LARGE SCALE GENOMIC DNA]</scope>
    <source>
        <strain>cv. Nipponbare</strain>
    </source>
</reference>
<reference key="2">
    <citation type="journal article" date="2005" name="Nature">
        <title>The map-based sequence of the rice genome.</title>
        <authorList>
            <consortium name="International rice genome sequencing project (IRGSP)"/>
        </authorList>
    </citation>
    <scope>NUCLEOTIDE SEQUENCE [LARGE SCALE GENOMIC DNA]</scope>
    <source>
        <strain>cv. Nipponbare</strain>
    </source>
</reference>
<reference key="3">
    <citation type="journal article" date="2008" name="Nucleic Acids Res.">
        <title>The rice annotation project database (RAP-DB): 2008 update.</title>
        <authorList>
            <consortium name="The rice annotation project (RAP)"/>
        </authorList>
    </citation>
    <scope>GENOME REANNOTATION</scope>
    <source>
        <strain>cv. Nipponbare</strain>
    </source>
</reference>
<reference key="4">
    <citation type="journal article" date="2013" name="Rice">
        <title>Improvement of the Oryza sativa Nipponbare reference genome using next generation sequence and optical map data.</title>
        <authorList>
            <person name="Kawahara Y."/>
            <person name="de la Bastide M."/>
            <person name="Hamilton J.P."/>
            <person name="Kanamori H."/>
            <person name="McCombie W.R."/>
            <person name="Ouyang S."/>
            <person name="Schwartz D.C."/>
            <person name="Tanaka T."/>
            <person name="Wu J."/>
            <person name="Zhou S."/>
            <person name="Childs K.L."/>
            <person name="Davidson R.M."/>
            <person name="Lin H."/>
            <person name="Quesada-Ocampo L."/>
            <person name="Vaillancourt B."/>
            <person name="Sakai H."/>
            <person name="Lee S.S."/>
            <person name="Kim J."/>
            <person name="Numa H."/>
            <person name="Itoh T."/>
            <person name="Buell C.R."/>
            <person name="Matsumoto T."/>
        </authorList>
    </citation>
    <scope>GENOME REANNOTATION</scope>
    <source>
        <strain>cv. Nipponbare</strain>
    </source>
</reference>
<reference key="5">
    <citation type="journal article" date="2005" name="PLoS Biol.">
        <title>The genomes of Oryza sativa: a history of duplications.</title>
        <authorList>
            <person name="Yu J."/>
            <person name="Wang J."/>
            <person name="Lin W."/>
            <person name="Li S."/>
            <person name="Li H."/>
            <person name="Zhou J."/>
            <person name="Ni P."/>
            <person name="Dong W."/>
            <person name="Hu S."/>
            <person name="Zeng C."/>
            <person name="Zhang J."/>
            <person name="Zhang Y."/>
            <person name="Li R."/>
            <person name="Xu Z."/>
            <person name="Li S."/>
            <person name="Li X."/>
            <person name="Zheng H."/>
            <person name="Cong L."/>
            <person name="Lin L."/>
            <person name="Yin J."/>
            <person name="Geng J."/>
            <person name="Li G."/>
            <person name="Shi J."/>
            <person name="Liu J."/>
            <person name="Lv H."/>
            <person name="Li J."/>
            <person name="Wang J."/>
            <person name="Deng Y."/>
            <person name="Ran L."/>
            <person name="Shi X."/>
            <person name="Wang X."/>
            <person name="Wu Q."/>
            <person name="Li C."/>
            <person name="Ren X."/>
            <person name="Wang J."/>
            <person name="Wang X."/>
            <person name="Li D."/>
            <person name="Liu D."/>
            <person name="Zhang X."/>
            <person name="Ji Z."/>
            <person name="Zhao W."/>
            <person name="Sun Y."/>
            <person name="Zhang Z."/>
            <person name="Bao J."/>
            <person name="Han Y."/>
            <person name="Dong L."/>
            <person name="Ji J."/>
            <person name="Chen P."/>
            <person name="Wu S."/>
            <person name="Liu J."/>
            <person name="Xiao Y."/>
            <person name="Bu D."/>
            <person name="Tan J."/>
            <person name="Yang L."/>
            <person name="Ye C."/>
            <person name="Zhang J."/>
            <person name="Xu J."/>
            <person name="Zhou Y."/>
            <person name="Yu Y."/>
            <person name="Zhang B."/>
            <person name="Zhuang S."/>
            <person name="Wei H."/>
            <person name="Liu B."/>
            <person name="Lei M."/>
            <person name="Yu H."/>
            <person name="Li Y."/>
            <person name="Xu H."/>
            <person name="Wei S."/>
            <person name="He X."/>
            <person name="Fang L."/>
            <person name="Zhang Z."/>
            <person name="Zhang Y."/>
            <person name="Huang X."/>
            <person name="Su Z."/>
            <person name="Tong W."/>
            <person name="Li J."/>
            <person name="Tong Z."/>
            <person name="Li S."/>
            <person name="Ye J."/>
            <person name="Wang L."/>
            <person name="Fang L."/>
            <person name="Lei T."/>
            <person name="Chen C.-S."/>
            <person name="Chen H.-C."/>
            <person name="Xu Z."/>
            <person name="Li H."/>
            <person name="Huang H."/>
            <person name="Zhang F."/>
            <person name="Xu H."/>
            <person name="Li N."/>
            <person name="Zhao C."/>
            <person name="Li S."/>
            <person name="Dong L."/>
            <person name="Huang Y."/>
            <person name="Li L."/>
            <person name="Xi Y."/>
            <person name="Qi Q."/>
            <person name="Li W."/>
            <person name="Zhang B."/>
            <person name="Hu W."/>
            <person name="Zhang Y."/>
            <person name="Tian X."/>
            <person name="Jiao Y."/>
            <person name="Liang X."/>
            <person name="Jin J."/>
            <person name="Gao L."/>
            <person name="Zheng W."/>
            <person name="Hao B."/>
            <person name="Liu S.-M."/>
            <person name="Wang W."/>
            <person name="Yuan L."/>
            <person name="Cao M."/>
            <person name="McDermott J."/>
            <person name="Samudrala R."/>
            <person name="Wang J."/>
            <person name="Wong G.K.-S."/>
            <person name="Yang H."/>
        </authorList>
    </citation>
    <scope>NUCLEOTIDE SEQUENCE [LARGE SCALE GENOMIC DNA]</scope>
    <source>
        <strain>cv. Nipponbare</strain>
    </source>
</reference>
<reference key="6">
    <citation type="journal article" date="2003" name="Science">
        <title>Collection, mapping, and annotation of over 28,000 cDNA clones from japonica rice.</title>
        <authorList>
            <consortium name="The rice full-length cDNA consortium"/>
        </authorList>
    </citation>
    <scope>NUCLEOTIDE SEQUENCE [LARGE SCALE MRNA]</scope>
    <source>
        <strain>cv. Nipponbare</strain>
    </source>
</reference>
<name>GLU2B_ORYSJ</name>